<accession>P0DH18</accession>
<accession>Q79YG9</accession>
<accession>Q7CER9</accession>
<feature type="chain" id="PRO_0000163152" description="DNA-directed RNA polymerase subunit epsilon">
    <location>
        <begin position="1"/>
        <end position="76"/>
    </location>
</feature>
<evidence type="ECO:0000255" key="1">
    <source>
        <dbReference type="HAMAP-Rule" id="MF_01553"/>
    </source>
</evidence>
<gene>
    <name evidence="1" type="primary">rpoY</name>
    <name type="ordered locus">SpyM3_1619</name>
</gene>
<name>RPOY_STRP3</name>
<reference key="1">
    <citation type="journal article" date="2002" name="Proc. Natl. Acad. Sci. U.S.A.">
        <title>Genome sequence of a serotype M3 strain of group A Streptococcus: phage-encoded toxins, the high-virulence phenotype, and clone emergence.</title>
        <authorList>
            <person name="Beres S.B."/>
            <person name="Sylva G.L."/>
            <person name="Barbian K.D."/>
            <person name="Lei B."/>
            <person name="Hoff J.S."/>
            <person name="Mammarella N.D."/>
            <person name="Liu M.-Y."/>
            <person name="Smoot J.C."/>
            <person name="Porcella S.F."/>
            <person name="Parkins L.D."/>
            <person name="Campbell D.S."/>
            <person name="Smith T.M."/>
            <person name="McCormick J.K."/>
            <person name="Leung D.Y.M."/>
            <person name="Schlievert P.M."/>
            <person name="Musser J.M."/>
        </authorList>
    </citation>
    <scope>NUCLEOTIDE SEQUENCE [LARGE SCALE GENOMIC DNA]</scope>
    <source>
        <strain>ATCC BAA-595 / MGAS315</strain>
    </source>
</reference>
<organism>
    <name type="scientific">Streptococcus pyogenes serotype M3 (strain ATCC BAA-595 / MGAS315)</name>
    <dbReference type="NCBI Taxonomy" id="198466"/>
    <lineage>
        <taxon>Bacteria</taxon>
        <taxon>Bacillati</taxon>
        <taxon>Bacillota</taxon>
        <taxon>Bacilli</taxon>
        <taxon>Lactobacillales</taxon>
        <taxon>Streptococcaceae</taxon>
        <taxon>Streptococcus</taxon>
    </lineage>
</organism>
<dbReference type="EC" id="2.7.7.6" evidence="1"/>
<dbReference type="EMBL" id="AE014074">
    <property type="protein sequence ID" value="AAM80226.1"/>
    <property type="molecule type" value="Genomic_DNA"/>
</dbReference>
<dbReference type="RefSeq" id="WP_002982907.1">
    <property type="nucleotide sequence ID" value="NC_004070.1"/>
</dbReference>
<dbReference type="SMR" id="P0DH18"/>
<dbReference type="KEGG" id="spg:SpyM3_1619"/>
<dbReference type="HOGENOM" id="CLU_187518_0_0_9"/>
<dbReference type="Proteomes" id="UP000000564">
    <property type="component" value="Chromosome"/>
</dbReference>
<dbReference type="GO" id="GO:0000428">
    <property type="term" value="C:DNA-directed RNA polymerase complex"/>
    <property type="evidence" value="ECO:0007669"/>
    <property type="project" value="UniProtKB-KW"/>
</dbReference>
<dbReference type="GO" id="GO:0003677">
    <property type="term" value="F:DNA binding"/>
    <property type="evidence" value="ECO:0007669"/>
    <property type="project" value="UniProtKB-UniRule"/>
</dbReference>
<dbReference type="GO" id="GO:0003899">
    <property type="term" value="F:DNA-directed RNA polymerase activity"/>
    <property type="evidence" value="ECO:0007669"/>
    <property type="project" value="UniProtKB-UniRule"/>
</dbReference>
<dbReference type="GO" id="GO:0006351">
    <property type="term" value="P:DNA-templated transcription"/>
    <property type="evidence" value="ECO:0007669"/>
    <property type="project" value="UniProtKB-UniRule"/>
</dbReference>
<dbReference type="Gene3D" id="3.10.20.730">
    <property type="entry name" value="RNAP, epsilon subunit-like"/>
    <property type="match status" value="1"/>
</dbReference>
<dbReference type="HAMAP" id="MF_01553">
    <property type="entry name" value="RNApol_bact_RpoY"/>
    <property type="match status" value="1"/>
</dbReference>
<dbReference type="InterPro" id="IPR009907">
    <property type="entry name" value="RpoY"/>
</dbReference>
<dbReference type="NCBIfam" id="NF010188">
    <property type="entry name" value="PRK13667.1"/>
    <property type="match status" value="1"/>
</dbReference>
<dbReference type="Pfam" id="PF07288">
    <property type="entry name" value="RpoY"/>
    <property type="match status" value="1"/>
</dbReference>
<sequence length="76" mass="9146">MIYKVFYQETKDQSPRRESTKALYLNIDATDELDGRIKARRLVEDNTYYNVEFIELLSDKHLDYEKETGVFELTEF</sequence>
<keyword id="KW-0240">DNA-directed RNA polymerase</keyword>
<keyword id="KW-0548">Nucleotidyltransferase</keyword>
<keyword id="KW-0804">Transcription</keyword>
<keyword id="KW-0808">Transferase</keyword>
<comment type="function">
    <text evidence="1">A non-essential component of RNA polymerase (RNAP).</text>
</comment>
<comment type="catalytic activity">
    <reaction evidence="1">
        <text>RNA(n) + a ribonucleoside 5'-triphosphate = RNA(n+1) + diphosphate</text>
        <dbReference type="Rhea" id="RHEA:21248"/>
        <dbReference type="Rhea" id="RHEA-COMP:14527"/>
        <dbReference type="Rhea" id="RHEA-COMP:17342"/>
        <dbReference type="ChEBI" id="CHEBI:33019"/>
        <dbReference type="ChEBI" id="CHEBI:61557"/>
        <dbReference type="ChEBI" id="CHEBI:140395"/>
        <dbReference type="EC" id="2.7.7.6"/>
    </reaction>
</comment>
<comment type="subunit">
    <text evidence="1">RNAP is composed of a core of 2 alpha, a beta and a beta' subunit. The core is associated with a delta subunit, and at least one of epsilon or omega. When a sigma factor is associated with the core the holoenzyme is formed, which can initiate transcription.</text>
</comment>
<comment type="similarity">
    <text evidence="1">Belongs to the RNA polymerase subunit epsilon family.</text>
</comment>
<protein>
    <recommendedName>
        <fullName evidence="1">DNA-directed RNA polymerase subunit epsilon</fullName>
        <shortName evidence="1">RNAP epsilon subunit</shortName>
        <ecNumber evidence="1">2.7.7.6</ecNumber>
    </recommendedName>
    <alternativeName>
        <fullName evidence="1">RNA polymerase epsilon subunit</fullName>
    </alternativeName>
    <alternativeName>
        <fullName evidence="1">Transcriptase subunit epsilon</fullName>
    </alternativeName>
</protein>
<proteinExistence type="inferred from homology"/>